<comment type="function">
    <text evidence="1">DNA helicase which seems to act as a postreplicative transcription termination factor. Involved in ATP-dependent release of nascent RNA. Forms a stable complex with single-stranded DNA, and to a lesser extent RNA (By similarity).</text>
</comment>
<comment type="subunit">
    <text evidence="1">Interacts with G2. Might be part of a transcription complex composed at least of G2, A18, and H5.</text>
</comment>
<comment type="subcellular location">
    <subcellularLocation>
        <location evidence="1">Virion</location>
    </subcellularLocation>
    <text evidence="1">Localizes to the virion core.</text>
</comment>
<comment type="similarity">
    <text evidence="3">Belongs to the helicase family. Poxviruses subfamily.</text>
</comment>
<name>A18_CWPXB</name>
<feature type="chain" id="PRO_0000102184" description="Transcript termination protein A18">
    <location>
        <begin position="1"/>
        <end position="492"/>
    </location>
</feature>
<feature type="domain" description="Helicase ATP-binding" evidence="2">
    <location>
        <begin position="100"/>
        <end position="256"/>
    </location>
</feature>
<feature type="short sequence motif" description="DESH box">
    <location>
        <begin position="206"/>
        <end position="209"/>
    </location>
</feature>
<feature type="binding site" evidence="2">
    <location>
        <begin position="113"/>
        <end position="120"/>
    </location>
    <ligand>
        <name>ATP</name>
        <dbReference type="ChEBI" id="CHEBI:30616"/>
    </ligand>
</feature>
<gene>
    <name type="ordered locus">CPXV151</name>
</gene>
<evidence type="ECO:0000250" key="1"/>
<evidence type="ECO:0000255" key="2">
    <source>
        <dbReference type="PROSITE-ProRule" id="PRU00541"/>
    </source>
</evidence>
<evidence type="ECO:0000305" key="3"/>
<proteinExistence type="inferred from homology"/>
<dbReference type="EC" id="3.6.4.-"/>
<dbReference type="EMBL" id="AF482758">
    <property type="protein sequence ID" value="AAM13592.1"/>
    <property type="molecule type" value="Genomic_DNA"/>
</dbReference>
<dbReference type="KEGG" id="vg:1486029"/>
<dbReference type="Proteomes" id="UP000152733">
    <property type="component" value="Segment"/>
</dbReference>
<dbReference type="GO" id="GO:0044423">
    <property type="term" value="C:virion component"/>
    <property type="evidence" value="ECO:0007669"/>
    <property type="project" value="UniProtKB-KW"/>
</dbReference>
<dbReference type="GO" id="GO:0005524">
    <property type="term" value="F:ATP binding"/>
    <property type="evidence" value="ECO:0007669"/>
    <property type="project" value="UniProtKB-KW"/>
</dbReference>
<dbReference type="GO" id="GO:0003677">
    <property type="term" value="F:DNA binding"/>
    <property type="evidence" value="ECO:0007669"/>
    <property type="project" value="UniProtKB-KW"/>
</dbReference>
<dbReference type="GO" id="GO:0004386">
    <property type="term" value="F:helicase activity"/>
    <property type="evidence" value="ECO:0007669"/>
    <property type="project" value="UniProtKB-KW"/>
</dbReference>
<dbReference type="GO" id="GO:0016787">
    <property type="term" value="F:hydrolase activity"/>
    <property type="evidence" value="ECO:0007669"/>
    <property type="project" value="UniProtKB-KW"/>
</dbReference>
<dbReference type="CDD" id="cd18785">
    <property type="entry name" value="SF2_C"/>
    <property type="match status" value="1"/>
</dbReference>
<dbReference type="Gene3D" id="3.40.50.300">
    <property type="entry name" value="P-loop containing nucleotide triphosphate hydrolases"/>
    <property type="match status" value="2"/>
</dbReference>
<dbReference type="InterPro" id="IPR006935">
    <property type="entry name" value="Helicase/UvrB_N"/>
</dbReference>
<dbReference type="InterPro" id="IPR014001">
    <property type="entry name" value="Helicase_ATP-bd"/>
</dbReference>
<dbReference type="InterPro" id="IPR050742">
    <property type="entry name" value="Helicase_Restrict-Modif_Enz"/>
</dbReference>
<dbReference type="InterPro" id="IPR027417">
    <property type="entry name" value="P-loop_NTPase"/>
</dbReference>
<dbReference type="PANTHER" id="PTHR47396:SF1">
    <property type="entry name" value="ATP-DEPENDENT HELICASE IRC3-RELATED"/>
    <property type="match status" value="1"/>
</dbReference>
<dbReference type="PANTHER" id="PTHR47396">
    <property type="entry name" value="TYPE I RESTRICTION ENZYME ECOKI R PROTEIN"/>
    <property type="match status" value="1"/>
</dbReference>
<dbReference type="Pfam" id="PF04851">
    <property type="entry name" value="ResIII"/>
    <property type="match status" value="1"/>
</dbReference>
<dbReference type="SMART" id="SM00487">
    <property type="entry name" value="DEXDc"/>
    <property type="match status" value="1"/>
</dbReference>
<dbReference type="SUPFAM" id="SSF52540">
    <property type="entry name" value="P-loop containing nucleoside triphosphate hydrolases"/>
    <property type="match status" value="1"/>
</dbReference>
<dbReference type="PROSITE" id="PS51192">
    <property type="entry name" value="HELICASE_ATP_BIND_1"/>
    <property type="match status" value="1"/>
</dbReference>
<keyword id="KW-0067">ATP-binding</keyword>
<keyword id="KW-0238">DNA-binding</keyword>
<keyword id="KW-0347">Helicase</keyword>
<keyword id="KW-0378">Hydrolase</keyword>
<keyword id="KW-0426">Late protein</keyword>
<keyword id="KW-0547">Nucleotide-binding</keyword>
<keyword id="KW-0804">Transcription</keyword>
<keyword id="KW-0946">Virion</keyword>
<accession>Q8QMT5</accession>
<organismHost>
    <name type="scientific">Bos taurus</name>
    <name type="common">Bovine</name>
    <dbReference type="NCBI Taxonomy" id="9913"/>
</organismHost>
<organismHost>
    <name type="scientific">Felis catus</name>
    <name type="common">Cat</name>
    <name type="synonym">Felis silvestris catus</name>
    <dbReference type="NCBI Taxonomy" id="9685"/>
</organismHost>
<organismHost>
    <name type="scientific">Homo sapiens</name>
    <name type="common">Human</name>
    <dbReference type="NCBI Taxonomy" id="9606"/>
</organismHost>
<organismHost>
    <name type="scientific">Loxodonta africana</name>
    <name type="common">African elephant</name>
    <dbReference type="NCBI Taxonomy" id="9785"/>
</organismHost>
<organismHost>
    <name type="scientific">Microtus agrestis</name>
    <name type="common">Short-tailed field vole</name>
    <dbReference type="NCBI Taxonomy" id="29092"/>
</organismHost>
<organismHost>
    <name type="scientific">Mus musculus</name>
    <name type="common">Mouse</name>
    <dbReference type="NCBI Taxonomy" id="10090"/>
</organismHost>
<organismHost>
    <name type="scientific">Myodes glareolus</name>
    <name type="common">Bank vole</name>
    <name type="synonym">Clethrionomys glareolus</name>
    <dbReference type="NCBI Taxonomy" id="447135"/>
</organismHost>
<protein>
    <recommendedName>
        <fullName>Transcript termination protein A18</fullName>
        <ecNumber>3.6.4.-</ecNumber>
    </recommendedName>
</protein>
<sequence length="492" mass="56565">MSLLKMEYNLYAELKKMTCGQPISLFNEDGDFVEVEPGSSFKFLIPKGFYASTSVKTSLVFETLTTTDNKITSINPTNAPKLYPLQRKVVSEVVSNMRKMIELKRPLYITLHLACGFGKTITTCYLMATHGRKTVICVPNKMLIHQWKTQVEAVGLEHKISIDGVSSLLKELKTQSPDVLIVVSRHLTNDAFCKYINKHYDLFILDESHTYNLMNNTAVTRFLAYYPLMMCYFLTATPRPANRIYCNSIINIAKLSDLKKTIYAVDSFFEPYSTDNIRHMVKRLDSPSNKYHIYTEKLLSVDEPRNQLILDTLVEEFKSGTINRILVITKLREHMVLFYKRLLDIFGPEVVFIGDAQNRRTPDMVKSIKDLNRFIFVSTLFYSGTGLDIPSLDSLFICSAVINNMQIEQLLGRVCRETELLDRTVYVFPSTSIKEIKYVIGNFVQRIISLSVDKLGFKQESYRKHQESEPASVPTSSREERVLNRIFNSQNR</sequence>
<organism>
    <name type="scientific">Cowpox virus (strain Brighton Red)</name>
    <name type="common">CPV</name>
    <dbReference type="NCBI Taxonomy" id="265872"/>
    <lineage>
        <taxon>Viruses</taxon>
        <taxon>Varidnaviria</taxon>
        <taxon>Bamfordvirae</taxon>
        <taxon>Nucleocytoviricota</taxon>
        <taxon>Pokkesviricetes</taxon>
        <taxon>Chitovirales</taxon>
        <taxon>Poxviridae</taxon>
        <taxon>Chordopoxvirinae</taxon>
        <taxon>Orthopoxvirus</taxon>
        <taxon>Cowpox virus</taxon>
    </lineage>
</organism>
<reference key="1">
    <citation type="submission" date="2003-05" db="EMBL/GenBank/DDBJ databases">
        <authorList>
            <person name="Dietrich F.S."/>
            <person name="Ray C.A."/>
            <person name="Sharma A.D."/>
            <person name="Allen A."/>
            <person name="Pickup D.J."/>
        </authorList>
    </citation>
    <scope>NUCLEOTIDE SEQUENCE [LARGE SCALE GENOMIC DNA]</scope>
</reference>